<comment type="function">
    <text evidence="1">Catalyzes carboxymethyl transfer from carboxy-S-adenosyl-L-methionine (Cx-SAM) to 5-hydroxyuridine (ho5U) to form 5-carboxymethoxyuridine (cmo5U) at position 34 in tRNAs.</text>
</comment>
<comment type="catalytic activity">
    <reaction evidence="1">
        <text>carboxy-S-adenosyl-L-methionine + 5-hydroxyuridine(34) in tRNA = 5-carboxymethoxyuridine(34) in tRNA + S-adenosyl-L-homocysteine + H(+)</text>
        <dbReference type="Rhea" id="RHEA:52848"/>
        <dbReference type="Rhea" id="RHEA-COMP:13381"/>
        <dbReference type="Rhea" id="RHEA-COMP:13383"/>
        <dbReference type="ChEBI" id="CHEBI:15378"/>
        <dbReference type="ChEBI" id="CHEBI:57856"/>
        <dbReference type="ChEBI" id="CHEBI:134278"/>
        <dbReference type="ChEBI" id="CHEBI:136877"/>
        <dbReference type="ChEBI" id="CHEBI:136879"/>
    </reaction>
</comment>
<comment type="subunit">
    <text evidence="1">Homotetramer.</text>
</comment>
<comment type="similarity">
    <text evidence="1">Belongs to the class I-like SAM-binding methyltransferase superfamily. CmoB family.</text>
</comment>
<dbReference type="EC" id="2.5.1.-" evidence="1"/>
<dbReference type="EMBL" id="AM933173">
    <property type="protein sequence ID" value="CAR37027.1"/>
    <property type="molecule type" value="Genomic_DNA"/>
</dbReference>
<dbReference type="RefSeq" id="WP_000569037.1">
    <property type="nucleotide sequence ID" value="NC_011274.1"/>
</dbReference>
<dbReference type="SMR" id="B5R8D1"/>
<dbReference type="KEGG" id="seg:SG1146"/>
<dbReference type="HOGENOM" id="CLU_052665_0_0_6"/>
<dbReference type="Proteomes" id="UP000008321">
    <property type="component" value="Chromosome"/>
</dbReference>
<dbReference type="GO" id="GO:0008168">
    <property type="term" value="F:methyltransferase activity"/>
    <property type="evidence" value="ECO:0007669"/>
    <property type="project" value="TreeGrafter"/>
</dbReference>
<dbReference type="GO" id="GO:0016765">
    <property type="term" value="F:transferase activity, transferring alkyl or aryl (other than methyl) groups"/>
    <property type="evidence" value="ECO:0007669"/>
    <property type="project" value="UniProtKB-UniRule"/>
</dbReference>
<dbReference type="GO" id="GO:0002098">
    <property type="term" value="P:tRNA wobble uridine modification"/>
    <property type="evidence" value="ECO:0007669"/>
    <property type="project" value="InterPro"/>
</dbReference>
<dbReference type="CDD" id="cd02440">
    <property type="entry name" value="AdoMet_MTases"/>
    <property type="match status" value="1"/>
</dbReference>
<dbReference type="FunFam" id="3.40.50.150:FF:000080">
    <property type="entry name" value="tRNA U34 carboxymethyltransferase"/>
    <property type="match status" value="1"/>
</dbReference>
<dbReference type="Gene3D" id="3.40.50.150">
    <property type="entry name" value="Vaccinia Virus protein VP39"/>
    <property type="match status" value="1"/>
</dbReference>
<dbReference type="HAMAP" id="MF_01590">
    <property type="entry name" value="tRNA_carboxymethyltr_CmoB"/>
    <property type="match status" value="1"/>
</dbReference>
<dbReference type="InterPro" id="IPR010017">
    <property type="entry name" value="CmoB"/>
</dbReference>
<dbReference type="InterPro" id="IPR027555">
    <property type="entry name" value="Mo5U34_MeTrfas-like"/>
</dbReference>
<dbReference type="InterPro" id="IPR029063">
    <property type="entry name" value="SAM-dependent_MTases_sf"/>
</dbReference>
<dbReference type="NCBIfam" id="NF011650">
    <property type="entry name" value="PRK15068.1"/>
    <property type="match status" value="1"/>
</dbReference>
<dbReference type="NCBIfam" id="TIGR00452">
    <property type="entry name" value="tRNA 5-methoxyuridine(34)/uridine 5-oxyacetic acid(34) synthase CmoB"/>
    <property type="match status" value="1"/>
</dbReference>
<dbReference type="PANTHER" id="PTHR43464">
    <property type="entry name" value="METHYLTRANSFERASE"/>
    <property type="match status" value="1"/>
</dbReference>
<dbReference type="PANTHER" id="PTHR43464:SF95">
    <property type="entry name" value="TRNA U34 CARBOXYMETHYLTRANSFERASE"/>
    <property type="match status" value="1"/>
</dbReference>
<dbReference type="Pfam" id="PF08003">
    <property type="entry name" value="Methyltransf_9"/>
    <property type="match status" value="1"/>
</dbReference>
<dbReference type="SUPFAM" id="SSF53335">
    <property type="entry name" value="S-adenosyl-L-methionine-dependent methyltransferases"/>
    <property type="match status" value="1"/>
</dbReference>
<keyword id="KW-0808">Transferase</keyword>
<keyword id="KW-0819">tRNA processing</keyword>
<feature type="chain" id="PRO_1000201307" description="tRNA U34 carboxymethyltransferase">
    <location>
        <begin position="1"/>
        <end position="323"/>
    </location>
</feature>
<feature type="binding site" evidence="1">
    <location>
        <position position="91"/>
    </location>
    <ligand>
        <name>carboxy-S-adenosyl-L-methionine</name>
        <dbReference type="ChEBI" id="CHEBI:134278"/>
    </ligand>
</feature>
<feature type="binding site" evidence="1">
    <location>
        <position position="105"/>
    </location>
    <ligand>
        <name>carboxy-S-adenosyl-L-methionine</name>
        <dbReference type="ChEBI" id="CHEBI:134278"/>
    </ligand>
</feature>
<feature type="binding site" evidence="1">
    <location>
        <position position="110"/>
    </location>
    <ligand>
        <name>carboxy-S-adenosyl-L-methionine</name>
        <dbReference type="ChEBI" id="CHEBI:134278"/>
    </ligand>
</feature>
<feature type="binding site" evidence="1">
    <location>
        <position position="130"/>
    </location>
    <ligand>
        <name>carboxy-S-adenosyl-L-methionine</name>
        <dbReference type="ChEBI" id="CHEBI:134278"/>
    </ligand>
</feature>
<feature type="binding site" evidence="1">
    <location>
        <begin position="152"/>
        <end position="154"/>
    </location>
    <ligand>
        <name>carboxy-S-adenosyl-L-methionine</name>
        <dbReference type="ChEBI" id="CHEBI:134278"/>
    </ligand>
</feature>
<feature type="binding site" evidence="1">
    <location>
        <begin position="181"/>
        <end position="182"/>
    </location>
    <ligand>
        <name>carboxy-S-adenosyl-L-methionine</name>
        <dbReference type="ChEBI" id="CHEBI:134278"/>
    </ligand>
</feature>
<feature type="binding site" evidence="1">
    <location>
        <position position="196"/>
    </location>
    <ligand>
        <name>carboxy-S-adenosyl-L-methionine</name>
        <dbReference type="ChEBI" id="CHEBI:134278"/>
    </ligand>
</feature>
<feature type="binding site" evidence="1">
    <location>
        <position position="200"/>
    </location>
    <ligand>
        <name>carboxy-S-adenosyl-L-methionine</name>
        <dbReference type="ChEBI" id="CHEBI:134278"/>
    </ligand>
</feature>
<feature type="binding site" evidence="1">
    <location>
        <position position="315"/>
    </location>
    <ligand>
        <name>carboxy-S-adenosyl-L-methionine</name>
        <dbReference type="ChEBI" id="CHEBI:134278"/>
    </ligand>
</feature>
<organism>
    <name type="scientific">Salmonella gallinarum (strain 287/91 / NCTC 13346)</name>
    <dbReference type="NCBI Taxonomy" id="550538"/>
    <lineage>
        <taxon>Bacteria</taxon>
        <taxon>Pseudomonadati</taxon>
        <taxon>Pseudomonadota</taxon>
        <taxon>Gammaproteobacteria</taxon>
        <taxon>Enterobacterales</taxon>
        <taxon>Enterobacteriaceae</taxon>
        <taxon>Salmonella</taxon>
    </lineage>
</organism>
<evidence type="ECO:0000255" key="1">
    <source>
        <dbReference type="HAMAP-Rule" id="MF_01590"/>
    </source>
</evidence>
<protein>
    <recommendedName>
        <fullName evidence="1">tRNA U34 carboxymethyltransferase</fullName>
        <ecNumber evidence="1">2.5.1.-</ecNumber>
    </recommendedName>
</protein>
<gene>
    <name evidence="1" type="primary">cmoB</name>
    <name type="ordered locus">SG1146</name>
</gene>
<sequence length="323" mass="37109">MIEFGNFYQLIAKNHLSHWLETLPAQIAAWQREQQHGLFKQWSNAVEFLPEMTPWRLDLLHSVTAESETPLSEGQLKRIDTLLRNLMPWRKGPFSLYGVDIDTEWRSDWKWDRVLPHLSDLTGRTILDVGCGSGYHLWRMIGAGAHLAVGIDPTQLFLCQFEVVRKLLGNDQRAHLLPLGIEQLPALKAFDTVFSMGVLYHRRSPLEHLWQLKDQLVNEGELVLETLVVDGDENTVLVPGDRYAQMRNVYFIPSAPALKKWLEKCGFIDVRIADVCVTTTEEQRRTEWMVTESLADFLDPNDRSKTVEGYPAPQRAVLIARKP</sequence>
<proteinExistence type="inferred from homology"/>
<accession>B5R8D1</accession>
<name>CMOB_SALG2</name>
<reference key="1">
    <citation type="journal article" date="2008" name="Genome Res.">
        <title>Comparative genome analysis of Salmonella enteritidis PT4 and Salmonella gallinarum 287/91 provides insights into evolutionary and host adaptation pathways.</title>
        <authorList>
            <person name="Thomson N.R."/>
            <person name="Clayton D.J."/>
            <person name="Windhorst D."/>
            <person name="Vernikos G."/>
            <person name="Davidson S."/>
            <person name="Churcher C."/>
            <person name="Quail M.A."/>
            <person name="Stevens M."/>
            <person name="Jones M.A."/>
            <person name="Watson M."/>
            <person name="Barron A."/>
            <person name="Layton A."/>
            <person name="Pickard D."/>
            <person name="Kingsley R.A."/>
            <person name="Bignell A."/>
            <person name="Clark L."/>
            <person name="Harris B."/>
            <person name="Ormond D."/>
            <person name="Abdellah Z."/>
            <person name="Brooks K."/>
            <person name="Cherevach I."/>
            <person name="Chillingworth T."/>
            <person name="Woodward J."/>
            <person name="Norberczak H."/>
            <person name="Lord A."/>
            <person name="Arrowsmith C."/>
            <person name="Jagels K."/>
            <person name="Moule S."/>
            <person name="Mungall K."/>
            <person name="Saunders M."/>
            <person name="Whitehead S."/>
            <person name="Chabalgoity J.A."/>
            <person name="Maskell D."/>
            <person name="Humphreys T."/>
            <person name="Roberts M."/>
            <person name="Barrow P.A."/>
            <person name="Dougan G."/>
            <person name="Parkhill J."/>
        </authorList>
    </citation>
    <scope>NUCLEOTIDE SEQUENCE [LARGE SCALE GENOMIC DNA]</scope>
    <source>
        <strain>287/91 / NCTC 13346</strain>
    </source>
</reference>